<gene>
    <name evidence="1" type="primary">deoC</name>
    <name type="ordered locus">lp_0497</name>
</gene>
<proteinExistence type="inferred from homology"/>
<feature type="chain" id="PRO_0000057236" description="Deoxyribose-phosphate aldolase">
    <location>
        <begin position="1"/>
        <end position="215"/>
    </location>
</feature>
<feature type="active site" description="Proton donor/acceptor" evidence="1">
    <location>
        <position position="89"/>
    </location>
</feature>
<feature type="active site" description="Schiff-base intermediate with acetaldehyde" evidence="1">
    <location>
        <position position="153"/>
    </location>
</feature>
<feature type="active site" description="Proton donor/acceptor" evidence="1">
    <location>
        <position position="182"/>
    </location>
</feature>
<dbReference type="EC" id="4.1.2.4" evidence="1"/>
<dbReference type="EMBL" id="AL935263">
    <property type="protein sequence ID" value="CCC77992.1"/>
    <property type="molecule type" value="Genomic_DNA"/>
</dbReference>
<dbReference type="RefSeq" id="WP_011101034.1">
    <property type="nucleotide sequence ID" value="NC_004567.2"/>
</dbReference>
<dbReference type="RefSeq" id="YP_004888506.1">
    <property type="nucleotide sequence ID" value="NC_004567.2"/>
</dbReference>
<dbReference type="SMR" id="Q88Z64"/>
<dbReference type="STRING" id="220668.lp_0497"/>
<dbReference type="EnsemblBacteria" id="CCC77992">
    <property type="protein sequence ID" value="CCC77992"/>
    <property type="gene ID" value="lp_0497"/>
</dbReference>
<dbReference type="KEGG" id="lpl:lp_0497"/>
<dbReference type="PATRIC" id="fig|220668.9.peg.409"/>
<dbReference type="eggNOG" id="COG0274">
    <property type="taxonomic scope" value="Bacteria"/>
</dbReference>
<dbReference type="HOGENOM" id="CLU_053595_0_1_9"/>
<dbReference type="OrthoDB" id="9778711at2"/>
<dbReference type="PhylomeDB" id="Q88Z64"/>
<dbReference type="SABIO-RK" id="Q88Z64"/>
<dbReference type="UniPathway" id="UPA00002">
    <property type="reaction ID" value="UER00468"/>
</dbReference>
<dbReference type="Proteomes" id="UP000000432">
    <property type="component" value="Chromosome"/>
</dbReference>
<dbReference type="GO" id="GO:0005737">
    <property type="term" value="C:cytoplasm"/>
    <property type="evidence" value="ECO:0007669"/>
    <property type="project" value="UniProtKB-SubCell"/>
</dbReference>
<dbReference type="GO" id="GO:0004139">
    <property type="term" value="F:deoxyribose-phosphate aldolase activity"/>
    <property type="evidence" value="ECO:0007669"/>
    <property type="project" value="UniProtKB-UniRule"/>
</dbReference>
<dbReference type="GO" id="GO:0006018">
    <property type="term" value="P:2-deoxyribose 1-phosphate catabolic process"/>
    <property type="evidence" value="ECO:0007669"/>
    <property type="project" value="UniProtKB-UniRule"/>
</dbReference>
<dbReference type="GO" id="GO:0016052">
    <property type="term" value="P:carbohydrate catabolic process"/>
    <property type="evidence" value="ECO:0007669"/>
    <property type="project" value="TreeGrafter"/>
</dbReference>
<dbReference type="GO" id="GO:0009264">
    <property type="term" value="P:deoxyribonucleotide catabolic process"/>
    <property type="evidence" value="ECO:0007669"/>
    <property type="project" value="InterPro"/>
</dbReference>
<dbReference type="CDD" id="cd00959">
    <property type="entry name" value="DeoC"/>
    <property type="match status" value="1"/>
</dbReference>
<dbReference type="FunFam" id="3.20.20.70:FF:000044">
    <property type="entry name" value="Deoxyribose-phosphate aldolase"/>
    <property type="match status" value="1"/>
</dbReference>
<dbReference type="Gene3D" id="3.20.20.70">
    <property type="entry name" value="Aldolase class I"/>
    <property type="match status" value="1"/>
</dbReference>
<dbReference type="HAMAP" id="MF_00114">
    <property type="entry name" value="DeoC_type1"/>
    <property type="match status" value="1"/>
</dbReference>
<dbReference type="InterPro" id="IPR013785">
    <property type="entry name" value="Aldolase_TIM"/>
</dbReference>
<dbReference type="InterPro" id="IPR011343">
    <property type="entry name" value="DeoC"/>
</dbReference>
<dbReference type="InterPro" id="IPR002915">
    <property type="entry name" value="DeoC/FbaB/LacD_aldolase"/>
</dbReference>
<dbReference type="InterPro" id="IPR028581">
    <property type="entry name" value="DeoC_typeI"/>
</dbReference>
<dbReference type="NCBIfam" id="TIGR00126">
    <property type="entry name" value="deoC"/>
    <property type="match status" value="1"/>
</dbReference>
<dbReference type="PANTHER" id="PTHR10889">
    <property type="entry name" value="DEOXYRIBOSE-PHOSPHATE ALDOLASE"/>
    <property type="match status" value="1"/>
</dbReference>
<dbReference type="PANTHER" id="PTHR10889:SF1">
    <property type="entry name" value="DEOXYRIBOSE-PHOSPHATE ALDOLASE"/>
    <property type="match status" value="1"/>
</dbReference>
<dbReference type="Pfam" id="PF01791">
    <property type="entry name" value="DeoC"/>
    <property type="match status" value="1"/>
</dbReference>
<dbReference type="PIRSF" id="PIRSF001357">
    <property type="entry name" value="DeoC"/>
    <property type="match status" value="1"/>
</dbReference>
<dbReference type="SMART" id="SM01133">
    <property type="entry name" value="DeoC"/>
    <property type="match status" value="1"/>
</dbReference>
<dbReference type="SUPFAM" id="SSF51569">
    <property type="entry name" value="Aldolase"/>
    <property type="match status" value="1"/>
</dbReference>
<protein>
    <recommendedName>
        <fullName evidence="1">Deoxyribose-phosphate aldolase</fullName>
        <shortName evidence="1">DERA</shortName>
        <ecNumber evidence="1">4.1.2.4</ecNumber>
    </recommendedName>
    <alternativeName>
        <fullName evidence="1">2-deoxy-D-ribose 5-phosphate aldolase</fullName>
    </alternativeName>
    <alternativeName>
        <fullName evidence="1">Phosphodeoxyriboaldolase</fullName>
        <shortName evidence="1">Deoxyriboaldolase</shortName>
    </alternativeName>
</protein>
<reference key="1">
    <citation type="journal article" date="2003" name="Proc. Natl. Acad. Sci. U.S.A.">
        <title>Complete genome sequence of Lactobacillus plantarum WCFS1.</title>
        <authorList>
            <person name="Kleerebezem M."/>
            <person name="Boekhorst J."/>
            <person name="van Kranenburg R."/>
            <person name="Molenaar D."/>
            <person name="Kuipers O.P."/>
            <person name="Leer R."/>
            <person name="Tarchini R."/>
            <person name="Peters S.A."/>
            <person name="Sandbrink H.M."/>
            <person name="Fiers M.W.E.J."/>
            <person name="Stiekema W."/>
            <person name="Klein Lankhorst R.M."/>
            <person name="Bron P.A."/>
            <person name="Hoffer S.M."/>
            <person name="Nierop Groot M.N."/>
            <person name="Kerkhoven R."/>
            <person name="De Vries M."/>
            <person name="Ursing B."/>
            <person name="De Vos W.M."/>
            <person name="Siezen R.J."/>
        </authorList>
    </citation>
    <scope>NUCLEOTIDE SEQUENCE [LARGE SCALE GENOMIC DNA]</scope>
    <source>
        <strain>ATCC BAA-793 / NCIMB 8826 / WCFS1</strain>
    </source>
</reference>
<reference key="2">
    <citation type="journal article" date="2012" name="J. Bacteriol.">
        <title>Complete resequencing and reannotation of the Lactobacillus plantarum WCFS1 genome.</title>
        <authorList>
            <person name="Siezen R.J."/>
            <person name="Francke C."/>
            <person name="Renckens B."/>
            <person name="Boekhorst J."/>
            <person name="Wels M."/>
            <person name="Kleerebezem M."/>
            <person name="van Hijum S.A."/>
        </authorList>
    </citation>
    <scope>NUCLEOTIDE SEQUENCE [LARGE SCALE GENOMIC DNA]</scope>
    <scope>GENOME REANNOTATION</scope>
    <source>
        <strain>ATCC BAA-793 / NCIMB 8826 / WCFS1</strain>
    </source>
</reference>
<comment type="function">
    <text evidence="1">Catalyzes a reversible aldol reaction between acetaldehyde and D-glyceraldehyde 3-phosphate to generate 2-deoxy-D-ribose 5-phosphate.</text>
</comment>
<comment type="catalytic activity">
    <reaction evidence="1">
        <text>2-deoxy-D-ribose 5-phosphate = D-glyceraldehyde 3-phosphate + acetaldehyde</text>
        <dbReference type="Rhea" id="RHEA:12821"/>
        <dbReference type="ChEBI" id="CHEBI:15343"/>
        <dbReference type="ChEBI" id="CHEBI:59776"/>
        <dbReference type="ChEBI" id="CHEBI:62877"/>
        <dbReference type="EC" id="4.1.2.4"/>
    </reaction>
</comment>
<comment type="pathway">
    <text evidence="1">Carbohydrate degradation; 2-deoxy-D-ribose 1-phosphate degradation; D-glyceraldehyde 3-phosphate and acetaldehyde from 2-deoxy-alpha-D-ribose 1-phosphate: step 2/2.</text>
</comment>
<comment type="subcellular location">
    <subcellularLocation>
        <location evidence="1">Cytoplasm</location>
    </subcellularLocation>
</comment>
<comment type="similarity">
    <text evidence="1">Belongs to the DeoC/FbaB aldolase family. DeoC type 1 subfamily.</text>
</comment>
<organism>
    <name type="scientific">Lactiplantibacillus plantarum (strain ATCC BAA-793 / NCIMB 8826 / WCFS1)</name>
    <name type="common">Lactobacillus plantarum</name>
    <dbReference type="NCBI Taxonomy" id="220668"/>
    <lineage>
        <taxon>Bacteria</taxon>
        <taxon>Bacillati</taxon>
        <taxon>Bacillota</taxon>
        <taxon>Bacilli</taxon>
        <taxon>Lactobacillales</taxon>
        <taxon>Lactobacillaceae</taxon>
        <taxon>Lactiplantibacillus</taxon>
    </lineage>
</organism>
<sequence>MKLNRYLDHTLLKPEATEQQIDQVVREALENHFYSVMVNPYWVKHVHAQLAGSDVATACVIGFPLGANTTAIKVAEAKQAIADGVDELDMVINIGELKGDHYDAVQQDIESVVTVGHTADKVVKVIIETALLTDGEIVKASEIVADAHADFVKTSTGFSTRGASVHDISLMKGAVQDRIGVKASGGIHTRDEALAMIDAGATRLGVSASMAIIGK</sequence>
<accession>Q88Z64</accession>
<accession>F9UKX7</accession>
<evidence type="ECO:0000255" key="1">
    <source>
        <dbReference type="HAMAP-Rule" id="MF_00114"/>
    </source>
</evidence>
<keyword id="KW-0963">Cytoplasm</keyword>
<keyword id="KW-0456">Lyase</keyword>
<keyword id="KW-1185">Reference proteome</keyword>
<keyword id="KW-0704">Schiff base</keyword>
<name>DEOC_LACPL</name>